<accession>Q9PP34</accession>
<accession>Q0PA01</accession>
<name>SYFA_CAMJE</name>
<dbReference type="EC" id="6.1.1.20"/>
<dbReference type="EMBL" id="AL111168">
    <property type="protein sequence ID" value="CAL35018.1"/>
    <property type="molecule type" value="Genomic_DNA"/>
</dbReference>
<dbReference type="PIR" id="A81363">
    <property type="entry name" value="A81363"/>
</dbReference>
<dbReference type="RefSeq" id="WP_002852567.1">
    <property type="nucleotide sequence ID" value="NZ_SZUC01000001.1"/>
</dbReference>
<dbReference type="RefSeq" id="YP_002344296.1">
    <property type="nucleotide sequence ID" value="NC_002163.1"/>
</dbReference>
<dbReference type="SMR" id="Q9PP34"/>
<dbReference type="IntAct" id="Q9PP34">
    <property type="interactions" value="12"/>
</dbReference>
<dbReference type="STRING" id="192222.Cj0897c"/>
<dbReference type="PaxDb" id="192222-Cj0897c"/>
<dbReference type="EnsemblBacteria" id="CAL35018">
    <property type="protein sequence ID" value="CAL35018"/>
    <property type="gene ID" value="Cj0897c"/>
</dbReference>
<dbReference type="GeneID" id="905193"/>
<dbReference type="KEGG" id="cje:Cj0897c"/>
<dbReference type="PATRIC" id="fig|192222.6.peg.881"/>
<dbReference type="eggNOG" id="COG0016">
    <property type="taxonomic scope" value="Bacteria"/>
</dbReference>
<dbReference type="HOGENOM" id="CLU_025086_0_1_7"/>
<dbReference type="OrthoDB" id="9800719at2"/>
<dbReference type="Proteomes" id="UP000000799">
    <property type="component" value="Chromosome"/>
</dbReference>
<dbReference type="GO" id="GO:0005737">
    <property type="term" value="C:cytoplasm"/>
    <property type="evidence" value="ECO:0007669"/>
    <property type="project" value="UniProtKB-SubCell"/>
</dbReference>
<dbReference type="GO" id="GO:0005524">
    <property type="term" value="F:ATP binding"/>
    <property type="evidence" value="ECO:0007669"/>
    <property type="project" value="UniProtKB-UniRule"/>
</dbReference>
<dbReference type="GO" id="GO:0000287">
    <property type="term" value="F:magnesium ion binding"/>
    <property type="evidence" value="ECO:0007669"/>
    <property type="project" value="UniProtKB-UniRule"/>
</dbReference>
<dbReference type="GO" id="GO:0004826">
    <property type="term" value="F:phenylalanine-tRNA ligase activity"/>
    <property type="evidence" value="ECO:0007669"/>
    <property type="project" value="UniProtKB-UniRule"/>
</dbReference>
<dbReference type="GO" id="GO:0000049">
    <property type="term" value="F:tRNA binding"/>
    <property type="evidence" value="ECO:0007669"/>
    <property type="project" value="InterPro"/>
</dbReference>
<dbReference type="GO" id="GO:0006432">
    <property type="term" value="P:phenylalanyl-tRNA aminoacylation"/>
    <property type="evidence" value="ECO:0007669"/>
    <property type="project" value="UniProtKB-UniRule"/>
</dbReference>
<dbReference type="CDD" id="cd00496">
    <property type="entry name" value="PheRS_alpha_core"/>
    <property type="match status" value="1"/>
</dbReference>
<dbReference type="Gene3D" id="3.30.930.10">
    <property type="entry name" value="Bira Bifunctional Protein, Domain 2"/>
    <property type="match status" value="1"/>
</dbReference>
<dbReference type="HAMAP" id="MF_00281">
    <property type="entry name" value="Phe_tRNA_synth_alpha1"/>
    <property type="match status" value="1"/>
</dbReference>
<dbReference type="InterPro" id="IPR006195">
    <property type="entry name" value="aa-tRNA-synth_II"/>
</dbReference>
<dbReference type="InterPro" id="IPR045864">
    <property type="entry name" value="aa-tRNA-synth_II/BPL/LPL"/>
</dbReference>
<dbReference type="InterPro" id="IPR004529">
    <property type="entry name" value="Phe-tRNA-synth_IIc_asu"/>
</dbReference>
<dbReference type="InterPro" id="IPR004188">
    <property type="entry name" value="Phe-tRNA_ligase_II_N"/>
</dbReference>
<dbReference type="InterPro" id="IPR022911">
    <property type="entry name" value="Phe_tRNA_ligase_alpha1_bac"/>
</dbReference>
<dbReference type="InterPro" id="IPR002319">
    <property type="entry name" value="Phenylalanyl-tRNA_Synthase"/>
</dbReference>
<dbReference type="InterPro" id="IPR010978">
    <property type="entry name" value="tRNA-bd_arm"/>
</dbReference>
<dbReference type="NCBIfam" id="TIGR00468">
    <property type="entry name" value="pheS"/>
    <property type="match status" value="1"/>
</dbReference>
<dbReference type="PANTHER" id="PTHR11538:SF41">
    <property type="entry name" value="PHENYLALANINE--TRNA LIGASE, MITOCHONDRIAL"/>
    <property type="match status" value="1"/>
</dbReference>
<dbReference type="PANTHER" id="PTHR11538">
    <property type="entry name" value="PHENYLALANYL-TRNA SYNTHETASE"/>
    <property type="match status" value="1"/>
</dbReference>
<dbReference type="Pfam" id="PF02912">
    <property type="entry name" value="Phe_tRNA-synt_N"/>
    <property type="match status" value="1"/>
</dbReference>
<dbReference type="Pfam" id="PF01409">
    <property type="entry name" value="tRNA-synt_2d"/>
    <property type="match status" value="1"/>
</dbReference>
<dbReference type="SUPFAM" id="SSF55681">
    <property type="entry name" value="Class II aaRS and biotin synthetases"/>
    <property type="match status" value="1"/>
</dbReference>
<dbReference type="SUPFAM" id="SSF46589">
    <property type="entry name" value="tRNA-binding arm"/>
    <property type="match status" value="1"/>
</dbReference>
<dbReference type="PROSITE" id="PS50862">
    <property type="entry name" value="AA_TRNA_LIGASE_II"/>
    <property type="match status" value="1"/>
</dbReference>
<feature type="chain" id="PRO_0000126681" description="Phenylalanine--tRNA ligase alpha subunit">
    <location>
        <begin position="1"/>
        <end position="330"/>
    </location>
</feature>
<feature type="binding site" evidence="1">
    <location>
        <position position="246"/>
    </location>
    <ligand>
        <name>Mg(2+)</name>
        <dbReference type="ChEBI" id="CHEBI:18420"/>
        <note>shared with beta subunit</note>
    </ligand>
</feature>
<protein>
    <recommendedName>
        <fullName>Phenylalanine--tRNA ligase alpha subunit</fullName>
        <ecNumber>6.1.1.20</ecNumber>
    </recommendedName>
    <alternativeName>
        <fullName>Phenylalanyl-tRNA synthetase alpha subunit</fullName>
        <shortName>PheRS</shortName>
    </alternativeName>
</protein>
<proteinExistence type="inferred from homology"/>
<evidence type="ECO:0000250" key="1"/>
<evidence type="ECO:0000305" key="2"/>
<comment type="catalytic activity">
    <reaction>
        <text>tRNA(Phe) + L-phenylalanine + ATP = L-phenylalanyl-tRNA(Phe) + AMP + diphosphate + H(+)</text>
        <dbReference type="Rhea" id="RHEA:19413"/>
        <dbReference type="Rhea" id="RHEA-COMP:9668"/>
        <dbReference type="Rhea" id="RHEA-COMP:9699"/>
        <dbReference type="ChEBI" id="CHEBI:15378"/>
        <dbReference type="ChEBI" id="CHEBI:30616"/>
        <dbReference type="ChEBI" id="CHEBI:33019"/>
        <dbReference type="ChEBI" id="CHEBI:58095"/>
        <dbReference type="ChEBI" id="CHEBI:78442"/>
        <dbReference type="ChEBI" id="CHEBI:78531"/>
        <dbReference type="ChEBI" id="CHEBI:456215"/>
        <dbReference type="EC" id="6.1.1.20"/>
    </reaction>
</comment>
<comment type="cofactor">
    <cofactor evidence="1">
        <name>Mg(2+)</name>
        <dbReference type="ChEBI" id="CHEBI:18420"/>
    </cofactor>
    <text evidence="1">Binds 2 magnesium ions per tetramer.</text>
</comment>
<comment type="subunit">
    <text evidence="1">Tetramer of two alpha and two beta subunits.</text>
</comment>
<comment type="subcellular location">
    <subcellularLocation>
        <location evidence="1">Cytoplasm</location>
    </subcellularLocation>
</comment>
<comment type="similarity">
    <text evidence="2">Belongs to the class-II aminoacyl-tRNA synthetase family. Phe-tRNA synthetase alpha subunit type 1 subfamily.</text>
</comment>
<sequence>MQNFIEQIQKCENLNDLEAIRISVLGKKGILTEGFTKLKELEDEAKKEFAAKLNAQKEIFNEAYLAKFKDLENLALEERMKQDALNFNYFDESITTGALHPVMSTMDKIIEYFIALNFSIEKGPLIEDDFHNFEALNLPKSHPARDMQDTFYFDDKRLLRTQTSPVQIRTMLAQKPPIRMIAPGAVFRRDFDITHTPMFHQVEGLVVEEGQKVSFANLKSVLEDFLRYMFGDVKVRFRPSFFPFTEPSAEVDISCVFCKGKGCRVCKHTGWLEVLGCGIVDPNVYNFVGYENVSGYAFGLGVERFAMLLHQIPDLRSLFEGDLRLLEQFR</sequence>
<keyword id="KW-0030">Aminoacyl-tRNA synthetase</keyword>
<keyword id="KW-0067">ATP-binding</keyword>
<keyword id="KW-0963">Cytoplasm</keyword>
<keyword id="KW-0436">Ligase</keyword>
<keyword id="KW-0460">Magnesium</keyword>
<keyword id="KW-0479">Metal-binding</keyword>
<keyword id="KW-0547">Nucleotide-binding</keyword>
<keyword id="KW-0648">Protein biosynthesis</keyword>
<keyword id="KW-1185">Reference proteome</keyword>
<gene>
    <name type="primary">pheS</name>
    <name type="ordered locus">Cj0897</name>
</gene>
<reference key="1">
    <citation type="journal article" date="2000" name="Nature">
        <title>The genome sequence of the food-borne pathogen Campylobacter jejuni reveals hypervariable sequences.</title>
        <authorList>
            <person name="Parkhill J."/>
            <person name="Wren B.W."/>
            <person name="Mungall K.L."/>
            <person name="Ketley J.M."/>
            <person name="Churcher C.M."/>
            <person name="Basham D."/>
            <person name="Chillingworth T."/>
            <person name="Davies R.M."/>
            <person name="Feltwell T."/>
            <person name="Holroyd S."/>
            <person name="Jagels K."/>
            <person name="Karlyshev A.V."/>
            <person name="Moule S."/>
            <person name="Pallen M.J."/>
            <person name="Penn C.W."/>
            <person name="Quail M.A."/>
            <person name="Rajandream M.A."/>
            <person name="Rutherford K.M."/>
            <person name="van Vliet A.H.M."/>
            <person name="Whitehead S."/>
            <person name="Barrell B.G."/>
        </authorList>
    </citation>
    <scope>NUCLEOTIDE SEQUENCE [LARGE SCALE GENOMIC DNA]</scope>
    <source>
        <strain>ATCC 700819 / NCTC 11168</strain>
    </source>
</reference>
<organism>
    <name type="scientific">Campylobacter jejuni subsp. jejuni serotype O:2 (strain ATCC 700819 / NCTC 11168)</name>
    <dbReference type="NCBI Taxonomy" id="192222"/>
    <lineage>
        <taxon>Bacteria</taxon>
        <taxon>Pseudomonadati</taxon>
        <taxon>Campylobacterota</taxon>
        <taxon>Epsilonproteobacteria</taxon>
        <taxon>Campylobacterales</taxon>
        <taxon>Campylobacteraceae</taxon>
        <taxon>Campylobacter</taxon>
    </lineage>
</organism>